<feature type="chain" id="PRO_0000221785" description="Early 4 ORF1 protein">
    <location>
        <begin position="1"/>
        <end position="128"/>
    </location>
</feature>
<feature type="topological domain" description="Cytoplasmic" evidence="1">
    <location>
        <begin position="1"/>
        <end position="26"/>
    </location>
</feature>
<feature type="transmembrane region" description="Helical" evidence="1">
    <location>
        <begin position="27"/>
        <end position="47"/>
    </location>
</feature>
<feature type="topological domain" description="Extracellular" evidence="1">
    <location>
        <begin position="48"/>
        <end position="99"/>
    </location>
</feature>
<feature type="transmembrane region" description="Helical" evidence="1">
    <location>
        <begin position="100"/>
        <end position="120"/>
    </location>
</feature>
<feature type="topological domain" description="Cytoplasmic" evidence="1">
    <location>
        <begin position="121"/>
        <end position="128"/>
    </location>
</feature>
<feature type="short sequence motif" description="PBZ domain binding motif">
    <location>
        <begin position="125"/>
        <end position="128"/>
    </location>
</feature>
<evidence type="ECO:0000255" key="1"/>
<evidence type="ECO:0000269" key="2">
    <source>
    </source>
</evidence>
<evidence type="ECO:0000269" key="3">
    <source>
    </source>
</evidence>
<evidence type="ECO:0000269" key="4">
    <source>
    </source>
</evidence>
<evidence type="ECO:0000305" key="5"/>
<dbReference type="EMBL" id="J01917">
    <property type="status" value="NOT_ANNOTATED_CDS"/>
    <property type="molecule type" value="Genomic_DNA"/>
</dbReference>
<dbReference type="PIR" id="A03808">
    <property type="entry name" value="Q4ADG2"/>
</dbReference>
<dbReference type="RefSeq" id="AP_000196.1">
    <property type="nucleotide sequence ID" value="AC_000007.1"/>
</dbReference>
<dbReference type="SMR" id="P03242"/>
<dbReference type="Proteomes" id="UP000008167">
    <property type="component" value="Segment"/>
</dbReference>
<dbReference type="GO" id="GO:0033644">
    <property type="term" value="C:host cell membrane"/>
    <property type="evidence" value="ECO:0007669"/>
    <property type="project" value="UniProtKB-SubCell"/>
</dbReference>
<dbReference type="GO" id="GO:0016020">
    <property type="term" value="C:membrane"/>
    <property type="evidence" value="ECO:0007669"/>
    <property type="project" value="UniProtKB-KW"/>
</dbReference>
<dbReference type="Gene3D" id="2.70.40.10">
    <property type="match status" value="1"/>
</dbReference>
<dbReference type="InterPro" id="IPR029054">
    <property type="entry name" value="dUTPase-like"/>
</dbReference>
<dbReference type="InterPro" id="IPR036157">
    <property type="entry name" value="dUTPase-like_sf"/>
</dbReference>
<dbReference type="Pfam" id="PF00692">
    <property type="entry name" value="dUTPase"/>
    <property type="match status" value="1"/>
</dbReference>
<dbReference type="SUPFAM" id="SSF51283">
    <property type="entry name" value="dUTPase-like"/>
    <property type="match status" value="1"/>
</dbReference>
<protein>
    <recommendedName>
        <fullName>Early 4 ORF1 protein</fullName>
        <shortName>E4-ORF1</shortName>
    </recommendedName>
    <alternativeName>
        <fullName>E4 ORF1 control protein</fullName>
    </alternativeName>
</protein>
<comment type="function">
    <text evidence="2 3 4">May modulate tight-junctions functions of infected cells through interactions with PDZ proteins. E4 ORF1 has ben show for Adenovirus 9 to interact with protein involved in tight junction regulation. May play a role in mTOR activation by activating PI3-kinase, thus overriding cellular checkpoint for translation.</text>
</comment>
<comment type="subunit">
    <text>May interact with host PDZ proteins through the PDZ domain binding motif (PBM), namely host DLG1, PATJ and TJP2.</text>
</comment>
<comment type="subcellular location">
    <subcellularLocation>
        <location evidence="5">Host membrane</location>
        <topology evidence="5">Multi-pass membrane protein</topology>
    </subcellularLocation>
</comment>
<comment type="similarity">
    <text evidence="5">Belongs to the adenoviridae E4-ORF1 family.</text>
</comment>
<organism>
    <name type="scientific">Human adenovirus C serotype 2</name>
    <name type="common">HAdV-2</name>
    <name type="synonym">Human adenovirus 2</name>
    <dbReference type="NCBI Taxonomy" id="10515"/>
    <lineage>
        <taxon>Viruses</taxon>
        <taxon>Varidnaviria</taxon>
        <taxon>Bamfordvirae</taxon>
        <taxon>Preplasmiviricota</taxon>
        <taxon>Tectiliviricetes</taxon>
        <taxon>Rowavirales</taxon>
        <taxon>Adenoviridae</taxon>
        <taxon>Mastadenovirus</taxon>
        <taxon>Human mastadenovirus C</taxon>
    </lineage>
</organism>
<name>E4RF1_ADE02</name>
<accession>P03242</accession>
<proteinExistence type="evidence at protein level"/>
<reference key="1">
    <citation type="journal article" date="1981" name="Nucleic Acids Res.">
        <title>Nucleotide sequence of adenovirus 2 DNA fragment encoding for the carboxylic region of the fiber protein and the entire E4 region.</title>
        <authorList>
            <person name="Herisse J."/>
            <person name="Rigolet M."/>
            <person name="Dupont de Dinechin S."/>
            <person name="Galibert F."/>
        </authorList>
    </citation>
    <scope>NUCLEOTIDE SEQUENCE [GENOMIC DNA]</scope>
    <scope>ALTERNATIVE SPLICING</scope>
</reference>
<reference key="2">
    <citation type="journal article" date="2003" name="Oncogene">
        <title>Selective PDZ protein-dependent stimulation of phosphatidylinositol 3-kinase by the adenovirus E4-ORF1 oncoprotein.</title>
        <authorList>
            <person name="Frese K.K."/>
            <person name="Lee S.S."/>
            <person name="Thomas D.L."/>
            <person name="Latorre I.J."/>
            <person name="Weiss R.S."/>
            <person name="Glaunsinger B.A."/>
            <person name="Javier R.T."/>
        </authorList>
    </citation>
    <scope>FUNCTION</scope>
</reference>
<reference key="3">
    <citation type="journal article" date="2005" name="Cell Cycle">
        <title>Adenovirus overrides cellular checkpoints for protein translation.</title>
        <authorList>
            <person name="O'Shea C.C."/>
            <person name="Choi S."/>
            <person name="McCormick F."/>
            <person name="Stokoe D."/>
        </authorList>
    </citation>
    <scope>FUNCTION</scope>
</reference>
<reference key="4">
    <citation type="journal article" date="2007" name="J. Virol.">
        <title>A new crucial protein interaction element that targets the adenovirus E4-ORF1 oncoprotein to membrane vesicles.</title>
        <authorList>
            <person name="Chung S.H."/>
            <person name="Frese K.K."/>
            <person name="Weiss R.S."/>
            <person name="Prasad B.V."/>
            <person name="Javier R.T."/>
        </authorList>
    </citation>
    <scope>INTERACTION WITH HOST PDZ-MOTIF PROTEINS</scope>
</reference>
<reference key="5">
    <citation type="journal article" date="2008" name="Oncogene">
        <title>Cell polarity proteins: common targets for tumorigenic human viruses.</title>
        <authorList>
            <person name="Javier R.T."/>
        </authorList>
    </citation>
    <scope>INTERACTION WITH HOST DLG1; PATJ AND TJP2</scope>
</reference>
<reference key="6">
    <citation type="journal article" date="2011" name="J. Virol.">
        <title>Emerging theme: cellular PDZ proteins as common targets of pathogenic viruses.</title>
        <authorList>
            <person name="Javier R.T."/>
            <person name="Rice A.P."/>
        </authorList>
    </citation>
    <scope>FUNCTION</scope>
</reference>
<reference key="7">
    <citation type="journal article" date="2005" name="Front. Biosci.">
        <title>Functions of the adenovirus E4 proteins and their impact on viral vectors.</title>
        <authorList>
            <person name="Weitzman M.D."/>
        </authorList>
    </citation>
    <scope>REVIEW</scope>
</reference>
<sequence>MAAAVEALYVVLEREGAILPRQEGFSGVYVFFSPINFVIPPMGAVMLSLRLRVCIPPGYFGRFLALTDVNQPDVFTESYIMTPDMTEELSVVLFNHGDQFFYGHAGMAVVRLMLIRVVFPVVRQASNV</sequence>
<keyword id="KW-0244">Early protein</keyword>
<keyword id="KW-1043">Host membrane</keyword>
<keyword id="KW-0945">Host-virus interaction</keyword>
<keyword id="KW-0472">Membrane</keyword>
<keyword id="KW-1185">Reference proteome</keyword>
<keyword id="KW-0812">Transmembrane</keyword>
<keyword id="KW-1133">Transmembrane helix</keyword>
<organismHost>
    <name type="scientific">Homo sapiens</name>
    <name type="common">Human</name>
    <dbReference type="NCBI Taxonomy" id="9606"/>
</organismHost>